<organism>
    <name type="scientific">Acinetobacter baumannii (strain ATCC 17978 / DSM 105126 / CIP 53.77 / LMG 1025 / NCDC KC755 / 5377)</name>
    <dbReference type="NCBI Taxonomy" id="400667"/>
    <lineage>
        <taxon>Bacteria</taxon>
        <taxon>Pseudomonadati</taxon>
        <taxon>Pseudomonadota</taxon>
        <taxon>Gammaproteobacteria</taxon>
        <taxon>Moraxellales</taxon>
        <taxon>Moraxellaceae</taxon>
        <taxon>Acinetobacter</taxon>
        <taxon>Acinetobacter calcoaceticus/baumannii complex</taxon>
    </lineage>
</organism>
<proteinExistence type="inferred from homology"/>
<protein>
    <recommendedName>
        <fullName evidence="1">Peptide methionine sulfoxide reductase MsrB</fullName>
        <ecNumber evidence="1">1.8.4.12</ecNumber>
    </recommendedName>
    <alternativeName>
        <fullName evidence="1">Peptide-methionine (R)-S-oxide reductase</fullName>
    </alternativeName>
</protein>
<accession>A3M4Q3</accession>
<reference key="1">
    <citation type="journal article" date="2007" name="Genes Dev.">
        <title>New insights into Acinetobacter baumannii pathogenesis revealed by high-density pyrosequencing and transposon mutagenesis.</title>
        <authorList>
            <person name="Smith M.G."/>
            <person name="Gianoulis T.A."/>
            <person name="Pukatzki S."/>
            <person name="Mekalanos J.J."/>
            <person name="Ornston L.N."/>
            <person name="Gerstein M."/>
            <person name="Snyder M."/>
        </authorList>
    </citation>
    <scope>NUCLEOTIDE SEQUENCE [LARGE SCALE GENOMIC DNA]</scope>
    <source>
        <strain>ATCC 17978 / DSM 105126 / CIP 53.77 / LMG 1025 / NCDC KC755 / 5377</strain>
    </source>
</reference>
<gene>
    <name evidence="1" type="primary">msrB</name>
    <name type="ordered locus">A1S_1469</name>
</gene>
<sequence length="139" mass="15909">MGKVNKTDREWQRELSPEEYRITRQKGTEPAFTGQYWNTKQHGTYVCRCCGAELFSSDAKYDSGCGWPSFFRPLNGSVIDEHEDLTHGMVRTEIVCHDCEAHLGHVFEDGPQPTGLRYCVNSASLQLKTQEKNDEETYP</sequence>
<keyword id="KW-0479">Metal-binding</keyword>
<keyword id="KW-0560">Oxidoreductase</keyword>
<keyword id="KW-0862">Zinc</keyword>
<evidence type="ECO:0000255" key="1">
    <source>
        <dbReference type="HAMAP-Rule" id="MF_01400"/>
    </source>
</evidence>
<evidence type="ECO:0000255" key="2">
    <source>
        <dbReference type="PROSITE-ProRule" id="PRU01126"/>
    </source>
</evidence>
<dbReference type="EC" id="1.8.4.12" evidence="1"/>
<dbReference type="EMBL" id="CP000521">
    <property type="protein sequence ID" value="ABO11897.2"/>
    <property type="molecule type" value="Genomic_DNA"/>
</dbReference>
<dbReference type="RefSeq" id="WP_000521160.1">
    <property type="nucleotide sequence ID" value="NZ_CP053098.1"/>
</dbReference>
<dbReference type="SMR" id="A3M4Q3"/>
<dbReference type="GeneID" id="92893679"/>
<dbReference type="KEGG" id="acb:A1S_1469"/>
<dbReference type="HOGENOM" id="CLU_031040_8_5_6"/>
<dbReference type="GO" id="GO:0005737">
    <property type="term" value="C:cytoplasm"/>
    <property type="evidence" value="ECO:0007669"/>
    <property type="project" value="TreeGrafter"/>
</dbReference>
<dbReference type="GO" id="GO:0033743">
    <property type="term" value="F:peptide-methionine (R)-S-oxide reductase activity"/>
    <property type="evidence" value="ECO:0007669"/>
    <property type="project" value="UniProtKB-UniRule"/>
</dbReference>
<dbReference type="GO" id="GO:0008270">
    <property type="term" value="F:zinc ion binding"/>
    <property type="evidence" value="ECO:0007669"/>
    <property type="project" value="UniProtKB-UniRule"/>
</dbReference>
<dbReference type="GO" id="GO:0030091">
    <property type="term" value="P:protein repair"/>
    <property type="evidence" value="ECO:0007669"/>
    <property type="project" value="InterPro"/>
</dbReference>
<dbReference type="GO" id="GO:0006979">
    <property type="term" value="P:response to oxidative stress"/>
    <property type="evidence" value="ECO:0007669"/>
    <property type="project" value="InterPro"/>
</dbReference>
<dbReference type="FunFam" id="2.170.150.20:FF:000001">
    <property type="entry name" value="Peptide methionine sulfoxide reductase MsrB"/>
    <property type="match status" value="1"/>
</dbReference>
<dbReference type="Gene3D" id="2.170.150.20">
    <property type="entry name" value="Peptide methionine sulfoxide reductase"/>
    <property type="match status" value="1"/>
</dbReference>
<dbReference type="HAMAP" id="MF_01400">
    <property type="entry name" value="MsrB"/>
    <property type="match status" value="1"/>
</dbReference>
<dbReference type="InterPro" id="IPR028427">
    <property type="entry name" value="Met_Sox_Rdtase_MsrB"/>
</dbReference>
<dbReference type="InterPro" id="IPR002579">
    <property type="entry name" value="Met_Sox_Rdtase_MsrB_dom"/>
</dbReference>
<dbReference type="InterPro" id="IPR011057">
    <property type="entry name" value="Mss4-like_sf"/>
</dbReference>
<dbReference type="NCBIfam" id="TIGR00357">
    <property type="entry name" value="peptide-methionine (R)-S-oxide reductase MsrB"/>
    <property type="match status" value="1"/>
</dbReference>
<dbReference type="PANTHER" id="PTHR10173">
    <property type="entry name" value="METHIONINE SULFOXIDE REDUCTASE"/>
    <property type="match status" value="1"/>
</dbReference>
<dbReference type="PANTHER" id="PTHR10173:SF52">
    <property type="entry name" value="METHIONINE-R-SULFOXIDE REDUCTASE B1"/>
    <property type="match status" value="1"/>
</dbReference>
<dbReference type="Pfam" id="PF01641">
    <property type="entry name" value="SelR"/>
    <property type="match status" value="1"/>
</dbReference>
<dbReference type="SUPFAM" id="SSF51316">
    <property type="entry name" value="Mss4-like"/>
    <property type="match status" value="1"/>
</dbReference>
<dbReference type="PROSITE" id="PS51790">
    <property type="entry name" value="MSRB"/>
    <property type="match status" value="1"/>
</dbReference>
<feature type="chain" id="PRO_1000145347" description="Peptide methionine sulfoxide reductase MsrB">
    <location>
        <begin position="1"/>
        <end position="139"/>
    </location>
</feature>
<feature type="domain" description="MsrB" evidence="2">
    <location>
        <begin position="8"/>
        <end position="130"/>
    </location>
</feature>
<feature type="active site" description="Nucleophile" evidence="2">
    <location>
        <position position="119"/>
    </location>
</feature>
<feature type="binding site" evidence="2">
    <location>
        <position position="47"/>
    </location>
    <ligand>
        <name>Zn(2+)</name>
        <dbReference type="ChEBI" id="CHEBI:29105"/>
    </ligand>
</feature>
<feature type="binding site" evidence="2">
    <location>
        <position position="50"/>
    </location>
    <ligand>
        <name>Zn(2+)</name>
        <dbReference type="ChEBI" id="CHEBI:29105"/>
    </ligand>
</feature>
<feature type="binding site" evidence="2">
    <location>
        <position position="96"/>
    </location>
    <ligand>
        <name>Zn(2+)</name>
        <dbReference type="ChEBI" id="CHEBI:29105"/>
    </ligand>
</feature>
<feature type="binding site" evidence="2">
    <location>
        <position position="99"/>
    </location>
    <ligand>
        <name>Zn(2+)</name>
        <dbReference type="ChEBI" id="CHEBI:29105"/>
    </ligand>
</feature>
<name>MSRB_ACIBT</name>
<comment type="catalytic activity">
    <reaction evidence="1">
        <text>L-methionyl-[protein] + [thioredoxin]-disulfide + H2O = L-methionyl-(R)-S-oxide-[protein] + [thioredoxin]-dithiol</text>
        <dbReference type="Rhea" id="RHEA:24164"/>
        <dbReference type="Rhea" id="RHEA-COMP:10698"/>
        <dbReference type="Rhea" id="RHEA-COMP:10700"/>
        <dbReference type="Rhea" id="RHEA-COMP:12313"/>
        <dbReference type="Rhea" id="RHEA-COMP:12314"/>
        <dbReference type="ChEBI" id="CHEBI:15377"/>
        <dbReference type="ChEBI" id="CHEBI:16044"/>
        <dbReference type="ChEBI" id="CHEBI:29950"/>
        <dbReference type="ChEBI" id="CHEBI:45764"/>
        <dbReference type="ChEBI" id="CHEBI:50058"/>
        <dbReference type="EC" id="1.8.4.12"/>
    </reaction>
</comment>
<comment type="cofactor">
    <cofactor evidence="1">
        <name>Zn(2+)</name>
        <dbReference type="ChEBI" id="CHEBI:29105"/>
    </cofactor>
    <text evidence="1">Binds 1 zinc ion per subunit. The zinc ion is important for the structural integrity of the protein.</text>
</comment>
<comment type="similarity">
    <text evidence="1">Belongs to the MsrB Met sulfoxide reductase family.</text>
</comment>